<sequence>MSEEKKQWSISDIEAIYQQPFNDLLYQAHAIHRTYHDPNSLQFATLLSIKTGACPEDCGYCSQSGHYKTHVEKEKLMSVEEVLQCAKEAKEGGAKRFCMGAAWRCPPDKAIPQLKEMIEGVKSLGLETCMTLGMLTKEQASHLKEAGLDYYNHNIDTSPSYYDKVVTTRKFSDRLDTLNNVRSAGINVCCGGILGLGETREDRIEFLLTLANMETPPESVPINRLIPVEGTPLAQAERVEGIELVRTIATARILMPKSAIRLTAGRTEMSDELQALCYFAGANSVFIGDKLLTEDNPQRFKDKTLFNKLGLTEMV</sequence>
<reference key="1">
    <citation type="journal article" date="2004" name="Nat. Genet.">
        <title>Evidence in the Legionella pneumophila genome for exploitation of host cell functions and high genome plasticity.</title>
        <authorList>
            <person name="Cazalet C."/>
            <person name="Rusniok C."/>
            <person name="Brueggemann H."/>
            <person name="Zidane N."/>
            <person name="Magnier A."/>
            <person name="Ma L."/>
            <person name="Tichit M."/>
            <person name="Jarraud S."/>
            <person name="Bouchier C."/>
            <person name="Vandenesch F."/>
            <person name="Kunst F."/>
            <person name="Etienne J."/>
            <person name="Glaser P."/>
            <person name="Buchrieser C."/>
        </authorList>
    </citation>
    <scope>NUCLEOTIDE SEQUENCE [LARGE SCALE GENOMIC DNA]</scope>
    <source>
        <strain>Lens</strain>
    </source>
</reference>
<evidence type="ECO:0000255" key="1">
    <source>
        <dbReference type="HAMAP-Rule" id="MF_01694"/>
    </source>
</evidence>
<evidence type="ECO:0000255" key="2">
    <source>
        <dbReference type="PROSITE-ProRule" id="PRU01266"/>
    </source>
</evidence>
<protein>
    <recommendedName>
        <fullName evidence="1">Biotin synthase</fullName>
        <ecNumber evidence="1">2.8.1.6</ecNumber>
    </recommendedName>
</protein>
<organism>
    <name type="scientific">Legionella pneumophila (strain Lens)</name>
    <dbReference type="NCBI Taxonomy" id="297245"/>
    <lineage>
        <taxon>Bacteria</taxon>
        <taxon>Pseudomonadati</taxon>
        <taxon>Pseudomonadota</taxon>
        <taxon>Gammaproteobacteria</taxon>
        <taxon>Legionellales</taxon>
        <taxon>Legionellaceae</taxon>
        <taxon>Legionella</taxon>
    </lineage>
</organism>
<comment type="function">
    <text evidence="1">Catalyzes the conversion of dethiobiotin (DTB) to biotin by the insertion of a sulfur atom into dethiobiotin via a radical-based mechanism.</text>
</comment>
<comment type="catalytic activity">
    <reaction evidence="1">
        <text>(4R,5S)-dethiobiotin + (sulfur carrier)-SH + 2 reduced [2Fe-2S]-[ferredoxin] + 2 S-adenosyl-L-methionine = (sulfur carrier)-H + biotin + 2 5'-deoxyadenosine + 2 L-methionine + 2 oxidized [2Fe-2S]-[ferredoxin]</text>
        <dbReference type="Rhea" id="RHEA:22060"/>
        <dbReference type="Rhea" id="RHEA-COMP:10000"/>
        <dbReference type="Rhea" id="RHEA-COMP:10001"/>
        <dbReference type="Rhea" id="RHEA-COMP:14737"/>
        <dbReference type="Rhea" id="RHEA-COMP:14739"/>
        <dbReference type="ChEBI" id="CHEBI:17319"/>
        <dbReference type="ChEBI" id="CHEBI:29917"/>
        <dbReference type="ChEBI" id="CHEBI:33737"/>
        <dbReference type="ChEBI" id="CHEBI:33738"/>
        <dbReference type="ChEBI" id="CHEBI:57586"/>
        <dbReference type="ChEBI" id="CHEBI:57844"/>
        <dbReference type="ChEBI" id="CHEBI:59789"/>
        <dbReference type="ChEBI" id="CHEBI:64428"/>
        <dbReference type="ChEBI" id="CHEBI:149473"/>
        <dbReference type="EC" id="2.8.1.6"/>
    </reaction>
</comment>
<comment type="cofactor">
    <cofactor evidence="1">
        <name>[4Fe-4S] cluster</name>
        <dbReference type="ChEBI" id="CHEBI:49883"/>
    </cofactor>
    <text evidence="1">Binds 1 [4Fe-4S] cluster. The cluster is coordinated with 3 cysteines and an exchangeable S-adenosyl-L-methionine.</text>
</comment>
<comment type="cofactor">
    <cofactor evidence="1">
        <name>[2Fe-2S] cluster</name>
        <dbReference type="ChEBI" id="CHEBI:190135"/>
    </cofactor>
    <text evidence="1">Binds 1 [2Fe-2S] cluster. The cluster is coordinated with 3 cysteines and 1 arginine.</text>
</comment>
<comment type="pathway">
    <text evidence="1">Cofactor biosynthesis; biotin biosynthesis; biotin from 7,8-diaminononanoate: step 2/2.</text>
</comment>
<comment type="subunit">
    <text evidence="1">Homodimer.</text>
</comment>
<comment type="similarity">
    <text evidence="1">Belongs to the radical SAM superfamily. Biotin synthase family.</text>
</comment>
<name>BIOB_LEGPL</name>
<keyword id="KW-0001">2Fe-2S</keyword>
<keyword id="KW-0004">4Fe-4S</keyword>
<keyword id="KW-0093">Biotin biosynthesis</keyword>
<keyword id="KW-0408">Iron</keyword>
<keyword id="KW-0411">Iron-sulfur</keyword>
<keyword id="KW-0479">Metal-binding</keyword>
<keyword id="KW-0949">S-adenosyl-L-methionine</keyword>
<keyword id="KW-0808">Transferase</keyword>
<proteinExistence type="inferred from homology"/>
<gene>
    <name evidence="1" type="primary">bioB</name>
    <name type="ordered locus">lpl1556</name>
</gene>
<accession>Q5WW97</accession>
<dbReference type="EC" id="2.8.1.6" evidence="1"/>
<dbReference type="EMBL" id="CR628337">
    <property type="protein sequence ID" value="CAH15796.1"/>
    <property type="molecule type" value="Genomic_DNA"/>
</dbReference>
<dbReference type="RefSeq" id="WP_011215593.1">
    <property type="nucleotide sequence ID" value="NC_006369.1"/>
</dbReference>
<dbReference type="SMR" id="Q5WW97"/>
<dbReference type="KEGG" id="lpf:lpl1556"/>
<dbReference type="LegioList" id="lpl1556"/>
<dbReference type="HOGENOM" id="CLU_033172_1_2_6"/>
<dbReference type="UniPathway" id="UPA00078">
    <property type="reaction ID" value="UER00162"/>
</dbReference>
<dbReference type="Proteomes" id="UP000002517">
    <property type="component" value="Chromosome"/>
</dbReference>
<dbReference type="GO" id="GO:0051537">
    <property type="term" value="F:2 iron, 2 sulfur cluster binding"/>
    <property type="evidence" value="ECO:0007669"/>
    <property type="project" value="UniProtKB-KW"/>
</dbReference>
<dbReference type="GO" id="GO:0051539">
    <property type="term" value="F:4 iron, 4 sulfur cluster binding"/>
    <property type="evidence" value="ECO:0007669"/>
    <property type="project" value="UniProtKB-KW"/>
</dbReference>
<dbReference type="GO" id="GO:0004076">
    <property type="term" value="F:biotin synthase activity"/>
    <property type="evidence" value="ECO:0007669"/>
    <property type="project" value="UniProtKB-UniRule"/>
</dbReference>
<dbReference type="GO" id="GO:0005506">
    <property type="term" value="F:iron ion binding"/>
    <property type="evidence" value="ECO:0007669"/>
    <property type="project" value="UniProtKB-UniRule"/>
</dbReference>
<dbReference type="GO" id="GO:0009102">
    <property type="term" value="P:biotin biosynthetic process"/>
    <property type="evidence" value="ECO:0007669"/>
    <property type="project" value="UniProtKB-UniRule"/>
</dbReference>
<dbReference type="CDD" id="cd01335">
    <property type="entry name" value="Radical_SAM"/>
    <property type="match status" value="1"/>
</dbReference>
<dbReference type="FunFam" id="3.20.20.70:FF:000011">
    <property type="entry name" value="Biotin synthase"/>
    <property type="match status" value="1"/>
</dbReference>
<dbReference type="Gene3D" id="3.20.20.70">
    <property type="entry name" value="Aldolase class I"/>
    <property type="match status" value="1"/>
</dbReference>
<dbReference type="HAMAP" id="MF_01694">
    <property type="entry name" value="BioB"/>
    <property type="match status" value="1"/>
</dbReference>
<dbReference type="InterPro" id="IPR013785">
    <property type="entry name" value="Aldolase_TIM"/>
</dbReference>
<dbReference type="InterPro" id="IPR010722">
    <property type="entry name" value="BATS_dom"/>
</dbReference>
<dbReference type="InterPro" id="IPR002684">
    <property type="entry name" value="Biotin_synth/BioAB"/>
</dbReference>
<dbReference type="InterPro" id="IPR024177">
    <property type="entry name" value="Biotin_synthase"/>
</dbReference>
<dbReference type="InterPro" id="IPR006638">
    <property type="entry name" value="Elp3/MiaA/NifB-like_rSAM"/>
</dbReference>
<dbReference type="InterPro" id="IPR007197">
    <property type="entry name" value="rSAM"/>
</dbReference>
<dbReference type="NCBIfam" id="TIGR00433">
    <property type="entry name" value="bioB"/>
    <property type="match status" value="1"/>
</dbReference>
<dbReference type="PANTHER" id="PTHR22976">
    <property type="entry name" value="BIOTIN SYNTHASE"/>
    <property type="match status" value="1"/>
</dbReference>
<dbReference type="PANTHER" id="PTHR22976:SF2">
    <property type="entry name" value="BIOTIN SYNTHASE, MITOCHONDRIAL"/>
    <property type="match status" value="1"/>
</dbReference>
<dbReference type="Pfam" id="PF06968">
    <property type="entry name" value="BATS"/>
    <property type="match status" value="1"/>
</dbReference>
<dbReference type="Pfam" id="PF04055">
    <property type="entry name" value="Radical_SAM"/>
    <property type="match status" value="1"/>
</dbReference>
<dbReference type="PIRSF" id="PIRSF001619">
    <property type="entry name" value="Biotin_synth"/>
    <property type="match status" value="1"/>
</dbReference>
<dbReference type="SFLD" id="SFLDG01060">
    <property type="entry name" value="BATS_domain_containing"/>
    <property type="match status" value="1"/>
</dbReference>
<dbReference type="SFLD" id="SFLDF00272">
    <property type="entry name" value="biotin_synthase"/>
    <property type="match status" value="1"/>
</dbReference>
<dbReference type="SMART" id="SM00876">
    <property type="entry name" value="BATS"/>
    <property type="match status" value="1"/>
</dbReference>
<dbReference type="SMART" id="SM00729">
    <property type="entry name" value="Elp3"/>
    <property type="match status" value="1"/>
</dbReference>
<dbReference type="SUPFAM" id="SSF102114">
    <property type="entry name" value="Radical SAM enzymes"/>
    <property type="match status" value="1"/>
</dbReference>
<dbReference type="PROSITE" id="PS51918">
    <property type="entry name" value="RADICAL_SAM"/>
    <property type="match status" value="1"/>
</dbReference>
<feature type="chain" id="PRO_0000381441" description="Biotin synthase">
    <location>
        <begin position="1"/>
        <end position="315"/>
    </location>
</feature>
<feature type="domain" description="Radical SAM core" evidence="2">
    <location>
        <begin position="39"/>
        <end position="266"/>
    </location>
</feature>
<feature type="binding site" evidence="1">
    <location>
        <position position="54"/>
    </location>
    <ligand>
        <name>[4Fe-4S] cluster</name>
        <dbReference type="ChEBI" id="CHEBI:49883"/>
        <note>4Fe-4S-S-AdoMet</note>
    </ligand>
</feature>
<feature type="binding site" evidence="1">
    <location>
        <position position="58"/>
    </location>
    <ligand>
        <name>[4Fe-4S] cluster</name>
        <dbReference type="ChEBI" id="CHEBI:49883"/>
        <note>4Fe-4S-S-AdoMet</note>
    </ligand>
</feature>
<feature type="binding site" evidence="1">
    <location>
        <position position="61"/>
    </location>
    <ligand>
        <name>[4Fe-4S] cluster</name>
        <dbReference type="ChEBI" id="CHEBI:49883"/>
        <note>4Fe-4S-S-AdoMet</note>
    </ligand>
</feature>
<feature type="binding site" evidence="1">
    <location>
        <position position="98"/>
    </location>
    <ligand>
        <name>[2Fe-2S] cluster</name>
        <dbReference type="ChEBI" id="CHEBI:190135"/>
    </ligand>
</feature>
<feature type="binding site" evidence="1">
    <location>
        <position position="129"/>
    </location>
    <ligand>
        <name>[2Fe-2S] cluster</name>
        <dbReference type="ChEBI" id="CHEBI:190135"/>
    </ligand>
</feature>
<feature type="binding site" evidence="1">
    <location>
        <position position="189"/>
    </location>
    <ligand>
        <name>[2Fe-2S] cluster</name>
        <dbReference type="ChEBI" id="CHEBI:190135"/>
    </ligand>
</feature>
<feature type="binding site" evidence="1">
    <location>
        <position position="261"/>
    </location>
    <ligand>
        <name>[2Fe-2S] cluster</name>
        <dbReference type="ChEBI" id="CHEBI:190135"/>
    </ligand>
</feature>